<reference key="1">
    <citation type="journal article" date="1993" name="J. Gen. Microbiol.">
        <title>Cloning and sequencing of two Candida parapsilosis genes encoding acid proteases.</title>
        <authorList>
            <person name="de Viragh P.A."/>
            <person name="Sanglard D."/>
            <person name="Togni G."/>
            <person name="Falchetto R."/>
            <person name="Monod M."/>
        </authorList>
    </citation>
    <scope>NUCLEOTIDE SEQUENCE [GENOMIC DNA]</scope>
    <scope>PROTEIN SEQUENCE OF 63-77</scope>
    <source>
        <strain>Isolate CHUV E18</strain>
    </source>
</reference>
<accession>P32951</accession>
<dbReference type="EC" id="3.4.23.24"/>
<dbReference type="EMBL" id="Z11919">
    <property type="protein sequence ID" value="CAA77977.1"/>
    <property type="molecule type" value="Genomic_DNA"/>
</dbReference>
<dbReference type="PIR" id="B47701">
    <property type="entry name" value="B47701"/>
</dbReference>
<dbReference type="PDB" id="3FV3">
    <property type="method" value="X-ray"/>
    <property type="resolution" value="1.85 A"/>
    <property type="chains" value="A/B/C/D/E/F/G/H=63-402"/>
</dbReference>
<dbReference type="PDB" id="3TNE">
    <property type="method" value="X-ray"/>
    <property type="resolution" value="2.40 A"/>
    <property type="chains" value="A/B=63-402"/>
</dbReference>
<dbReference type="PDB" id="7AGB">
    <property type="method" value="X-ray"/>
    <property type="resolution" value="1.70 A"/>
    <property type="chains" value="A/B/C/D=63-402"/>
</dbReference>
<dbReference type="PDB" id="7AGC">
    <property type="method" value="X-ray"/>
    <property type="resolution" value="1.35 A"/>
    <property type="chains" value="A/B/D/F=63-402"/>
</dbReference>
<dbReference type="PDB" id="7AGD">
    <property type="method" value="X-ray"/>
    <property type="resolution" value="1.80 A"/>
    <property type="chains" value="A/B/C/D=63-402"/>
</dbReference>
<dbReference type="PDB" id="7AGE">
    <property type="method" value="X-ray"/>
    <property type="resolution" value="1.30 A"/>
    <property type="chains" value="A/B/D/F=63-402"/>
</dbReference>
<dbReference type="PDBsum" id="3FV3"/>
<dbReference type="PDBsum" id="3TNE"/>
<dbReference type="PDBsum" id="7AGB"/>
<dbReference type="PDBsum" id="7AGC"/>
<dbReference type="PDBsum" id="7AGD"/>
<dbReference type="PDBsum" id="7AGE"/>
<dbReference type="SMR" id="P32951"/>
<dbReference type="MEROPS" id="A01.038"/>
<dbReference type="GlyCosmos" id="P32951">
    <property type="glycosylation" value="1 site, No reported glycans"/>
</dbReference>
<dbReference type="VEuPathDB" id="FungiDB:CPAR2_102410"/>
<dbReference type="BRENDA" id="3.4.23.24">
    <property type="organism ID" value="1133"/>
</dbReference>
<dbReference type="EvolutionaryTrace" id="P32951"/>
<dbReference type="GO" id="GO:0005576">
    <property type="term" value="C:extracellular region"/>
    <property type="evidence" value="ECO:0007669"/>
    <property type="project" value="UniProtKB-SubCell"/>
</dbReference>
<dbReference type="GO" id="GO:0004190">
    <property type="term" value="F:aspartic-type endopeptidase activity"/>
    <property type="evidence" value="ECO:0007669"/>
    <property type="project" value="UniProtKB-KW"/>
</dbReference>
<dbReference type="GO" id="GO:0006508">
    <property type="term" value="P:proteolysis"/>
    <property type="evidence" value="ECO:0007669"/>
    <property type="project" value="UniProtKB-KW"/>
</dbReference>
<dbReference type="CDD" id="cd05474">
    <property type="entry name" value="SAP_like"/>
    <property type="match status" value="1"/>
</dbReference>
<dbReference type="FunFam" id="2.40.70.10:FF:000011">
    <property type="entry name" value="Aspartic protease"/>
    <property type="match status" value="1"/>
</dbReference>
<dbReference type="FunFam" id="2.40.70.10:FF:000023">
    <property type="entry name" value="Aspartic protease"/>
    <property type="match status" value="1"/>
</dbReference>
<dbReference type="Gene3D" id="2.40.70.10">
    <property type="entry name" value="Acid Proteases"/>
    <property type="match status" value="2"/>
</dbReference>
<dbReference type="InterPro" id="IPR001461">
    <property type="entry name" value="Aspartic_peptidase_A1"/>
</dbReference>
<dbReference type="InterPro" id="IPR001969">
    <property type="entry name" value="Aspartic_peptidase_AS"/>
</dbReference>
<dbReference type="InterPro" id="IPR033121">
    <property type="entry name" value="PEPTIDASE_A1"/>
</dbReference>
<dbReference type="InterPro" id="IPR021109">
    <property type="entry name" value="Peptidase_aspartic_dom_sf"/>
</dbReference>
<dbReference type="InterPro" id="IPR033876">
    <property type="entry name" value="SAP-like"/>
</dbReference>
<dbReference type="PANTHER" id="PTHR47966:SF65">
    <property type="entry name" value="ASPARTIC-TYPE ENDOPEPTIDASE"/>
    <property type="match status" value="1"/>
</dbReference>
<dbReference type="PANTHER" id="PTHR47966">
    <property type="entry name" value="BETA-SITE APP-CLEAVING ENZYME, ISOFORM A-RELATED"/>
    <property type="match status" value="1"/>
</dbReference>
<dbReference type="Pfam" id="PF00026">
    <property type="entry name" value="Asp"/>
    <property type="match status" value="1"/>
</dbReference>
<dbReference type="PRINTS" id="PR00792">
    <property type="entry name" value="PEPSIN"/>
</dbReference>
<dbReference type="SUPFAM" id="SSF50630">
    <property type="entry name" value="Acid proteases"/>
    <property type="match status" value="1"/>
</dbReference>
<dbReference type="PROSITE" id="PS00141">
    <property type="entry name" value="ASP_PROTEASE"/>
    <property type="match status" value="2"/>
</dbReference>
<dbReference type="PROSITE" id="PS51767">
    <property type="entry name" value="PEPTIDASE_A1"/>
    <property type="match status" value="1"/>
</dbReference>
<name>CARP1_CANPA</name>
<feature type="signal peptide" description="Or 18, or 21" evidence="2">
    <location>
        <begin position="1"/>
        <end position="25"/>
    </location>
</feature>
<feature type="propeptide" id="PRO_0000025869" description="Activation peptide" evidence="5">
    <location>
        <begin position="26"/>
        <end position="62"/>
    </location>
</feature>
<feature type="chain" id="PRO_0000025870" description="Candidapepsin-1">
    <location>
        <begin position="63"/>
        <end position="402"/>
    </location>
</feature>
<feature type="domain" description="Peptidase A1" evidence="3">
    <location>
        <begin position="76"/>
        <end position="389"/>
    </location>
</feature>
<feature type="active site" evidence="4">
    <location>
        <position position="94"/>
    </location>
</feature>
<feature type="active site" evidence="4">
    <location>
        <position position="282"/>
    </location>
</feature>
<feature type="glycosylation site" description="N-linked (GlcNAc...) asparagine" evidence="2">
    <location>
        <position position="52"/>
    </location>
</feature>
<feature type="disulfide bond" evidence="1">
    <location>
        <begin position="109"/>
        <end position="115"/>
    </location>
</feature>
<feature type="disulfide bond" evidence="1">
    <location>
        <begin position="320"/>
        <end position="354"/>
    </location>
</feature>
<feature type="strand" evidence="8">
    <location>
        <begin position="65"/>
        <end position="71"/>
    </location>
</feature>
<feature type="strand" evidence="8">
    <location>
        <begin position="76"/>
        <end position="82"/>
    </location>
</feature>
<feature type="turn" evidence="8">
    <location>
        <begin position="83"/>
        <end position="86"/>
    </location>
</feature>
<feature type="strand" evidence="8">
    <location>
        <begin position="87"/>
        <end position="94"/>
    </location>
</feature>
<feature type="strand" evidence="8">
    <location>
        <begin position="100"/>
        <end position="109"/>
    </location>
</feature>
<feature type="strand" evidence="7">
    <location>
        <begin position="116"/>
        <end position="118"/>
    </location>
</feature>
<feature type="helix" evidence="8">
    <location>
        <begin position="123"/>
        <end position="125"/>
    </location>
</feature>
<feature type="strand" evidence="8">
    <location>
        <begin position="130"/>
        <end position="139"/>
    </location>
</feature>
<feature type="strand" evidence="8">
    <location>
        <begin position="145"/>
        <end position="157"/>
    </location>
</feature>
<feature type="strand" evidence="8">
    <location>
        <begin position="160"/>
        <end position="177"/>
    </location>
</feature>
<feature type="strand" evidence="8">
    <location>
        <begin position="179"/>
        <end position="181"/>
    </location>
</feature>
<feature type="helix" evidence="8">
    <location>
        <begin position="185"/>
        <end position="187"/>
    </location>
</feature>
<feature type="strand" evidence="8">
    <location>
        <begin position="197"/>
        <end position="199"/>
    </location>
</feature>
<feature type="helix" evidence="8">
    <location>
        <begin position="205"/>
        <end position="211"/>
    </location>
</feature>
<feature type="strand" evidence="8">
    <location>
        <begin position="216"/>
        <end position="223"/>
    </location>
</feature>
<feature type="strand" evidence="8">
    <location>
        <begin position="230"/>
        <end position="236"/>
    </location>
</feature>
<feature type="strand" evidence="8">
    <location>
        <begin position="238"/>
        <end position="240"/>
    </location>
</feature>
<feature type="strand" evidence="8">
    <location>
        <begin position="243"/>
        <end position="246"/>
    </location>
</feature>
<feature type="strand" evidence="8">
    <location>
        <begin position="249"/>
        <end position="254"/>
    </location>
</feature>
<feature type="strand" evidence="8">
    <location>
        <begin position="256"/>
        <end position="258"/>
    </location>
</feature>
<feature type="strand" evidence="8">
    <location>
        <begin position="260"/>
        <end position="268"/>
    </location>
</feature>
<feature type="strand" evidence="8">
    <location>
        <begin position="271"/>
        <end position="281"/>
    </location>
</feature>
<feature type="strand" evidence="8">
    <location>
        <begin position="285"/>
        <end position="291"/>
    </location>
</feature>
<feature type="helix" evidence="8">
    <location>
        <begin position="292"/>
        <end position="302"/>
    </location>
</feature>
<feature type="strand" evidence="8">
    <location>
        <begin position="305"/>
        <end position="310"/>
    </location>
</feature>
<feature type="strand" evidence="8">
    <location>
        <begin position="313"/>
        <end position="318"/>
    </location>
</feature>
<feature type="strand" evidence="8">
    <location>
        <begin position="326"/>
        <end position="332"/>
    </location>
</feature>
<feature type="helix" evidence="8">
    <location>
        <begin position="333"/>
        <end position="335"/>
    </location>
</feature>
<feature type="strand" evidence="8">
    <location>
        <begin position="337"/>
        <end position="341"/>
    </location>
</feature>
<feature type="helix" evidence="8">
    <location>
        <begin position="342"/>
        <end position="345"/>
    </location>
</feature>
<feature type="strand" evidence="8">
    <location>
        <begin position="346"/>
        <end position="348"/>
    </location>
</feature>
<feature type="strand" evidence="8">
    <location>
        <begin position="350"/>
        <end position="352"/>
    </location>
</feature>
<feature type="strand" evidence="8">
    <location>
        <begin position="354"/>
        <end position="363"/>
    </location>
</feature>
<feature type="helix" evidence="8">
    <location>
        <begin position="368"/>
        <end position="371"/>
    </location>
</feature>
<feature type="strand" evidence="8">
    <location>
        <begin position="377"/>
        <end position="380"/>
    </location>
</feature>
<feature type="turn" evidence="8">
    <location>
        <begin position="381"/>
        <end position="384"/>
    </location>
</feature>
<feature type="strand" evidence="8">
    <location>
        <begin position="385"/>
        <end position="391"/>
    </location>
</feature>
<feature type="strand" evidence="8">
    <location>
        <begin position="399"/>
        <end position="401"/>
    </location>
</feature>
<keyword id="KW-0002">3D-structure</keyword>
<keyword id="KW-0064">Aspartyl protease</keyword>
<keyword id="KW-0165">Cleavage on pair of basic residues</keyword>
<keyword id="KW-0903">Direct protein sequencing</keyword>
<keyword id="KW-1015">Disulfide bond</keyword>
<keyword id="KW-0325">Glycoprotein</keyword>
<keyword id="KW-0378">Hydrolase</keyword>
<keyword id="KW-0645">Protease</keyword>
<keyword id="KW-0964">Secreted</keyword>
<keyword id="KW-0732">Signal</keyword>
<keyword id="KW-0865">Zymogen</keyword>
<gene>
    <name type="primary">SAPP1</name>
    <name type="synonym">ACPR</name>
</gene>
<organism>
    <name type="scientific">Candida parapsilosis</name>
    <name type="common">Yeast</name>
    <dbReference type="NCBI Taxonomy" id="5480"/>
    <lineage>
        <taxon>Eukaryota</taxon>
        <taxon>Fungi</taxon>
        <taxon>Dikarya</taxon>
        <taxon>Ascomycota</taxon>
        <taxon>Saccharomycotina</taxon>
        <taxon>Pichiomycetes</taxon>
        <taxon>Debaryomycetaceae</taxon>
        <taxon>Candida/Lodderomyces clade</taxon>
        <taxon>Candida</taxon>
    </lineage>
</organism>
<proteinExistence type="evidence at protein level"/>
<protein>
    <recommendedName>
        <fullName>Candidapepsin-1</fullName>
        <ecNumber>3.4.23.24</ecNumber>
    </recommendedName>
    <alternativeName>
        <fullName>ACP 1</fullName>
    </alternativeName>
    <alternativeName>
        <fullName>Aspartate protease 1</fullName>
    </alternativeName>
</protein>
<sequence length="402" mass="42833">MVAIVTLTRQVLLTIALALFAQGAAIPEEAAKRDDNPGFVALDFDVLRKPLNLTEALLREKRDSISLSLINEGPSYASKVSVGSNKQQQTVIIDTGSSDFWVVDSNAQCGKGVDCKSSGTFTPSSSSSYKNLGAAFTIRYGDGSTSQGTWGKDTVTINGVSITGQQIADVTQTSVDQGILGIGYTSNEAVYDTSGRQTTPNYDNVPVTLKKQGKIRTNAYSLYLNSPSAETGTIIFGGVDNAKYSGKLVAEQVTSSQPLTISLASVNLKGSSFSFGDGALLDSGTTLTYFPSDFAAQLADKAGARLVQVARDQYLYFIDCNTDTSGTTVFNFGNGAKITVPNTEYVYQNGDGTCLWGIQPSDDTILGDNFLRHAYYLLYNLDANTISIAQVKYTTDSSISAV</sequence>
<evidence type="ECO:0000250" key="1"/>
<evidence type="ECO:0000255" key="2"/>
<evidence type="ECO:0000255" key="3">
    <source>
        <dbReference type="PROSITE-ProRule" id="PRU01103"/>
    </source>
</evidence>
<evidence type="ECO:0000255" key="4">
    <source>
        <dbReference type="PROSITE-ProRule" id="PRU10094"/>
    </source>
</evidence>
<evidence type="ECO:0000269" key="5">
    <source>
    </source>
</evidence>
<evidence type="ECO:0000305" key="6"/>
<evidence type="ECO:0007829" key="7">
    <source>
        <dbReference type="PDB" id="7AGC"/>
    </source>
</evidence>
<evidence type="ECO:0007829" key="8">
    <source>
        <dbReference type="PDB" id="7AGE"/>
    </source>
</evidence>
<comment type="catalytic activity">
    <reaction>
        <text>Preferential cleavage at the carboxyl of hydrophobic amino acids, but fails to cleave 15-Leu-|-Tyr-16, 16-Tyr-|-Leu-17 and 24-Phe-|-Phe-25 of insulin B chain. Activates trypsinogen, and degrades keratin.</text>
        <dbReference type="EC" id="3.4.23.24"/>
    </reaction>
</comment>
<comment type="subcellular location">
    <subcellularLocation>
        <location>Secreted</location>
    </subcellularLocation>
</comment>
<comment type="PTM">
    <text evidence="6">O-glycosylated.</text>
</comment>
<comment type="similarity">
    <text evidence="6">Belongs to the peptidase A1 family.</text>
</comment>